<proteinExistence type="inferred from homology"/>
<keyword id="KW-0997">Cell inner membrane</keyword>
<keyword id="KW-1003">Cell membrane</keyword>
<keyword id="KW-0328">Glycosyltransferase</keyword>
<keyword id="KW-0472">Membrane</keyword>
<keyword id="KW-0808">Transferase</keyword>
<organism>
    <name type="scientific">Escherichia coli (strain SE11)</name>
    <dbReference type="NCBI Taxonomy" id="409438"/>
    <lineage>
        <taxon>Bacteria</taxon>
        <taxon>Pseudomonadati</taxon>
        <taxon>Pseudomonadota</taxon>
        <taxon>Gammaproteobacteria</taxon>
        <taxon>Enterobacterales</taxon>
        <taxon>Enterobacteriaceae</taxon>
        <taxon>Escherichia</taxon>
    </lineage>
</organism>
<comment type="function">
    <text evidence="1">Catalyzes the synthesis of Und-PP-GlcNAc-ManNAcA-Fuc4NAc (Lipid III), the third lipid-linked intermediate involved in ECA synthesis.</text>
</comment>
<comment type="catalytic activity">
    <reaction evidence="1">
        <text>beta-D-ManNAcA-(1-&gt;4)-alpha-D-GlcNAc-di-trans,octa-cis-undecaprenyl diphosphate + dTDP-4-acetamido-4,6-dideoxy-alpha-D-galactose = alpha-D-FucNAc4-(1-&gt;4)-beta-D-ManNAcA-(1-&gt;4)-D-GlcNAc-undecaprenyl diphosphate + dTDP + H(+)</text>
        <dbReference type="Rhea" id="RHEA:28759"/>
        <dbReference type="ChEBI" id="CHEBI:15378"/>
        <dbReference type="ChEBI" id="CHEBI:58369"/>
        <dbReference type="ChEBI" id="CHEBI:61495"/>
        <dbReference type="ChEBI" id="CHEBI:61496"/>
        <dbReference type="ChEBI" id="CHEBI:68493"/>
        <dbReference type="EC" id="2.4.1.325"/>
    </reaction>
</comment>
<comment type="pathway">
    <text evidence="1">Bacterial outer membrane biogenesis; enterobacterial common antigen biosynthesis.</text>
</comment>
<comment type="subcellular location">
    <subcellularLocation>
        <location evidence="1">Cell inner membrane</location>
        <topology evidence="1">Peripheral membrane protein</topology>
    </subcellularLocation>
</comment>
<comment type="similarity">
    <text evidence="1">Belongs to the glycosyltransferase 56 family.</text>
</comment>
<protein>
    <recommendedName>
        <fullName evidence="1">TDP-N-acetylfucosamine:lipid II N-acetylfucosaminyltransferase</fullName>
        <ecNumber evidence="1">2.4.1.325</ecNumber>
    </recommendedName>
    <alternativeName>
        <fullName evidence="1">4-alpha-L-fucosyltransferase</fullName>
    </alternativeName>
    <alternativeName>
        <fullName evidence="1">TDP-Fuc4NAc:lipid II Fuc4NAc transferase</fullName>
        <shortName evidence="1">Fuc4NAc transferase</shortName>
    </alternativeName>
</protein>
<feature type="chain" id="PRO_1000134600" description="TDP-N-acetylfucosamine:lipid II N-acetylfucosaminyltransferase">
    <location>
        <begin position="1"/>
        <end position="359"/>
    </location>
</feature>
<reference key="1">
    <citation type="journal article" date="2008" name="DNA Res.">
        <title>Complete genome sequence and comparative analysis of the wild-type commensal Escherichia coli strain SE11 isolated from a healthy adult.</title>
        <authorList>
            <person name="Oshima K."/>
            <person name="Toh H."/>
            <person name="Ogura Y."/>
            <person name="Sasamoto H."/>
            <person name="Morita H."/>
            <person name="Park S.-H."/>
            <person name="Ooka T."/>
            <person name="Iyoda S."/>
            <person name="Taylor T.D."/>
            <person name="Hayashi T."/>
            <person name="Itoh K."/>
            <person name="Hattori M."/>
        </authorList>
    </citation>
    <scope>NUCLEOTIDE SEQUENCE [LARGE SCALE GENOMIC DNA]</scope>
    <source>
        <strain>SE11</strain>
    </source>
</reference>
<sequence>MTVLIHVLGSDIPHHNRTVLRFFNDALAATSEHAREFMVVGKDDGLSDSCPALSVQFFPGKKSLAEAAIAKAKANRQQRFFFHGQFNPKLWLALLSGGIKPSQFFWHIWGADLYELSSGLRYKLFYPLRRLAQKRVGCVFATRGDLSFFAKTHPKVRGELLYFPTRMDPSLNTMANDRQREGKMTILVGNSGDRSNDHIAALCAVHQQLGDTVKVVVPMGYPPNNEAYIEEVRQAGLELFSEENLQILSEKLEFDAYLALLRQCDLGYFIFARQQGIGTLCLLIQAGIPCVLNRENPFWQDMTEQHLPVLFTTDDLNEDIVREAQRQLASVDKNTIAFFSPNYLQGWQRALAIAAGEVA</sequence>
<evidence type="ECO:0000255" key="1">
    <source>
        <dbReference type="HAMAP-Rule" id="MF_01002"/>
    </source>
</evidence>
<name>WECF_ECOSE</name>
<accession>B6I4D0</accession>
<gene>
    <name evidence="1" type="primary">wecF</name>
    <name evidence="1" type="synonym">rffT</name>
    <name type="ordered locus">ECSE_4076</name>
</gene>
<dbReference type="EC" id="2.4.1.325" evidence="1"/>
<dbReference type="EMBL" id="AP009240">
    <property type="protein sequence ID" value="BAG79600.1"/>
    <property type="molecule type" value="Genomic_DNA"/>
</dbReference>
<dbReference type="RefSeq" id="WP_000217217.1">
    <property type="nucleotide sequence ID" value="NC_011415.1"/>
</dbReference>
<dbReference type="SMR" id="B6I4D0"/>
<dbReference type="CAZy" id="GT56">
    <property type="family name" value="Glycosyltransferase Family 56"/>
</dbReference>
<dbReference type="KEGG" id="ecy:ECSE_4076"/>
<dbReference type="HOGENOM" id="CLU_066584_0_0_6"/>
<dbReference type="UniPathway" id="UPA00566"/>
<dbReference type="Proteomes" id="UP000008199">
    <property type="component" value="Chromosome"/>
</dbReference>
<dbReference type="GO" id="GO:0005886">
    <property type="term" value="C:plasma membrane"/>
    <property type="evidence" value="ECO:0007669"/>
    <property type="project" value="UniProtKB-SubCell"/>
</dbReference>
<dbReference type="GO" id="GO:0102031">
    <property type="term" value="F:4-acetamido-4,6-dideoxy-D-galactose transferase activity"/>
    <property type="evidence" value="ECO:0007669"/>
    <property type="project" value="UniProtKB-EC"/>
</dbReference>
<dbReference type="GO" id="GO:0008417">
    <property type="term" value="F:fucosyltransferase activity"/>
    <property type="evidence" value="ECO:0007669"/>
    <property type="project" value="InterPro"/>
</dbReference>
<dbReference type="GO" id="GO:0009246">
    <property type="term" value="P:enterobacterial common antigen biosynthetic process"/>
    <property type="evidence" value="ECO:0007669"/>
    <property type="project" value="UniProtKB-UniRule"/>
</dbReference>
<dbReference type="GO" id="GO:0036065">
    <property type="term" value="P:fucosylation"/>
    <property type="evidence" value="ECO:0007669"/>
    <property type="project" value="InterPro"/>
</dbReference>
<dbReference type="HAMAP" id="MF_01002">
    <property type="entry name" value="WecF_RffT"/>
    <property type="match status" value="1"/>
</dbReference>
<dbReference type="InterPro" id="IPR009993">
    <property type="entry name" value="WecF"/>
</dbReference>
<dbReference type="NCBIfam" id="NF002752">
    <property type="entry name" value="PRK02797.1-1"/>
    <property type="match status" value="1"/>
</dbReference>
<dbReference type="NCBIfam" id="NF002753">
    <property type="entry name" value="PRK02797.1-2"/>
    <property type="match status" value="1"/>
</dbReference>
<dbReference type="NCBIfam" id="NF002754">
    <property type="entry name" value="PRK02797.1-3"/>
    <property type="match status" value="1"/>
</dbReference>
<dbReference type="Pfam" id="PF07429">
    <property type="entry name" value="Glyco_transf_56"/>
    <property type="match status" value="1"/>
</dbReference>